<gene>
    <name evidence="1" type="primary">accD</name>
    <name type="ordered locus">BMEA_A2167</name>
</gene>
<dbReference type="EC" id="2.1.3.15" evidence="1"/>
<dbReference type="EMBL" id="CP001488">
    <property type="protein sequence ID" value="ACO01813.1"/>
    <property type="molecule type" value="Genomic_DNA"/>
</dbReference>
<dbReference type="RefSeq" id="WP_002965171.1">
    <property type="nucleotide sequence ID" value="NC_012441.1"/>
</dbReference>
<dbReference type="SMR" id="C0RFZ1"/>
<dbReference type="GeneID" id="55591673"/>
<dbReference type="KEGG" id="bmi:BMEA_A2167"/>
<dbReference type="HOGENOM" id="CLU_015486_1_0_5"/>
<dbReference type="UniPathway" id="UPA00655">
    <property type="reaction ID" value="UER00711"/>
</dbReference>
<dbReference type="Proteomes" id="UP000001748">
    <property type="component" value="Chromosome I"/>
</dbReference>
<dbReference type="GO" id="GO:0009329">
    <property type="term" value="C:acetate CoA-transferase complex"/>
    <property type="evidence" value="ECO:0007669"/>
    <property type="project" value="TreeGrafter"/>
</dbReference>
<dbReference type="GO" id="GO:0003989">
    <property type="term" value="F:acetyl-CoA carboxylase activity"/>
    <property type="evidence" value="ECO:0007669"/>
    <property type="project" value="InterPro"/>
</dbReference>
<dbReference type="GO" id="GO:0005524">
    <property type="term" value="F:ATP binding"/>
    <property type="evidence" value="ECO:0007669"/>
    <property type="project" value="UniProtKB-KW"/>
</dbReference>
<dbReference type="GO" id="GO:0016743">
    <property type="term" value="F:carboxyl- or carbamoyltransferase activity"/>
    <property type="evidence" value="ECO:0007669"/>
    <property type="project" value="UniProtKB-UniRule"/>
</dbReference>
<dbReference type="GO" id="GO:0006633">
    <property type="term" value="P:fatty acid biosynthetic process"/>
    <property type="evidence" value="ECO:0007669"/>
    <property type="project" value="UniProtKB-KW"/>
</dbReference>
<dbReference type="GO" id="GO:2001295">
    <property type="term" value="P:malonyl-CoA biosynthetic process"/>
    <property type="evidence" value="ECO:0007669"/>
    <property type="project" value="UniProtKB-UniRule"/>
</dbReference>
<dbReference type="Gene3D" id="3.90.226.10">
    <property type="entry name" value="2-enoyl-CoA Hydratase, Chain A, domain 1"/>
    <property type="match status" value="1"/>
</dbReference>
<dbReference type="HAMAP" id="MF_01395">
    <property type="entry name" value="AcetylCoA_CT_beta"/>
    <property type="match status" value="1"/>
</dbReference>
<dbReference type="InterPro" id="IPR034733">
    <property type="entry name" value="AcCoA_carboxyl_beta"/>
</dbReference>
<dbReference type="InterPro" id="IPR000438">
    <property type="entry name" value="Acetyl_CoA_COase_Trfase_b_su"/>
</dbReference>
<dbReference type="InterPro" id="IPR029045">
    <property type="entry name" value="ClpP/crotonase-like_dom_sf"/>
</dbReference>
<dbReference type="InterPro" id="IPR011762">
    <property type="entry name" value="COA_CT_N"/>
</dbReference>
<dbReference type="NCBIfam" id="TIGR00515">
    <property type="entry name" value="accD"/>
    <property type="match status" value="1"/>
</dbReference>
<dbReference type="PANTHER" id="PTHR42995">
    <property type="entry name" value="ACETYL-COENZYME A CARBOXYLASE CARBOXYL TRANSFERASE SUBUNIT BETA, CHLOROPLASTIC"/>
    <property type="match status" value="1"/>
</dbReference>
<dbReference type="PANTHER" id="PTHR42995:SF5">
    <property type="entry name" value="ACETYL-COENZYME A CARBOXYLASE CARBOXYL TRANSFERASE SUBUNIT BETA, CHLOROPLASTIC"/>
    <property type="match status" value="1"/>
</dbReference>
<dbReference type="Pfam" id="PF01039">
    <property type="entry name" value="Carboxyl_trans"/>
    <property type="match status" value="1"/>
</dbReference>
<dbReference type="PRINTS" id="PR01070">
    <property type="entry name" value="ACCCTRFRASEB"/>
</dbReference>
<dbReference type="SUPFAM" id="SSF52096">
    <property type="entry name" value="ClpP/crotonase"/>
    <property type="match status" value="1"/>
</dbReference>
<dbReference type="PROSITE" id="PS50980">
    <property type="entry name" value="COA_CT_NTER"/>
    <property type="match status" value="1"/>
</dbReference>
<name>ACCD_BRUMB</name>
<sequence length="301" mass="33270">MNWITNYVRPKINSMLGRREMPENLWIKDPSTGEMVFHKDLESNQFVIPSSGHHMRIKAKDRLRFFFDNGEYTTLEAPKVPLDPLKFRDEKKYIDRLKDYRSRTGMDDAIVNGLGTIEGLPIVATVQDFSFMGGSLGMGAGEAIIQGFEKAIELKRPLVLFASSGGARMQEGILSLMQLPRTTVAVEMLKEAGLPYIVVLTNPTTGGVTASYAMLGDIHIAEPGALIGFAGPRVIEQTIREKLPEGFQSSEYLMEHGMVDMVVSRLELKATIARLLKIMTKQPANSDAPAPQKPDADSKAA</sequence>
<keyword id="KW-0067">ATP-binding</keyword>
<keyword id="KW-0963">Cytoplasm</keyword>
<keyword id="KW-0275">Fatty acid biosynthesis</keyword>
<keyword id="KW-0276">Fatty acid metabolism</keyword>
<keyword id="KW-0444">Lipid biosynthesis</keyword>
<keyword id="KW-0443">Lipid metabolism</keyword>
<keyword id="KW-0547">Nucleotide-binding</keyword>
<keyword id="KW-0808">Transferase</keyword>
<organism>
    <name type="scientific">Brucella melitensis biotype 2 (strain ATCC 23457)</name>
    <dbReference type="NCBI Taxonomy" id="546272"/>
    <lineage>
        <taxon>Bacteria</taxon>
        <taxon>Pseudomonadati</taxon>
        <taxon>Pseudomonadota</taxon>
        <taxon>Alphaproteobacteria</taxon>
        <taxon>Hyphomicrobiales</taxon>
        <taxon>Brucellaceae</taxon>
        <taxon>Brucella/Ochrobactrum group</taxon>
        <taxon>Brucella</taxon>
    </lineage>
</organism>
<proteinExistence type="inferred from homology"/>
<feature type="chain" id="PRO_0000389705" description="Acetyl-coenzyme A carboxylase carboxyl transferase subunit beta">
    <location>
        <begin position="1"/>
        <end position="301"/>
    </location>
</feature>
<feature type="domain" description="CoA carboxyltransferase N-terminal" evidence="2">
    <location>
        <begin position="25"/>
        <end position="294"/>
    </location>
</feature>
<accession>C0RFZ1</accession>
<protein>
    <recommendedName>
        <fullName evidence="1">Acetyl-coenzyme A carboxylase carboxyl transferase subunit beta</fullName>
        <shortName evidence="1">ACCase subunit beta</shortName>
        <shortName evidence="1">Acetyl-CoA carboxylase carboxyltransferase subunit beta</shortName>
        <ecNumber evidence="1">2.1.3.15</ecNumber>
    </recommendedName>
</protein>
<reference key="1">
    <citation type="submission" date="2009-03" db="EMBL/GenBank/DDBJ databases">
        <title>Brucella melitensis ATCC 23457 whole genome shotgun sequencing project.</title>
        <authorList>
            <person name="Setubal J.C."/>
            <person name="Boyle S."/>
            <person name="Crasta O.R."/>
            <person name="Gillespie J.J."/>
            <person name="Kenyon R.W."/>
            <person name="Lu J."/>
            <person name="Mane S."/>
            <person name="Nagrani S."/>
            <person name="Shallom J.M."/>
            <person name="Shallom S."/>
            <person name="Shukla M."/>
            <person name="Snyder E.E."/>
            <person name="Sobral B.W."/>
            <person name="Wattam A.R."/>
            <person name="Will R."/>
            <person name="Williams K."/>
            <person name="Yoo H."/>
            <person name="Munk C."/>
            <person name="Tapia R."/>
            <person name="Han C."/>
            <person name="Detter J.C."/>
            <person name="Bruce D."/>
            <person name="Brettin T.S."/>
        </authorList>
    </citation>
    <scope>NUCLEOTIDE SEQUENCE [LARGE SCALE GENOMIC DNA]</scope>
    <source>
        <strain>ATCC 23457</strain>
    </source>
</reference>
<comment type="function">
    <text evidence="1">Component of the acetyl coenzyme A carboxylase (ACC) complex. Biotin carboxylase (BC) catalyzes the carboxylation of biotin on its carrier protein (BCCP) and then the CO(2) group is transferred by the transcarboxylase to acetyl-CoA to form malonyl-CoA.</text>
</comment>
<comment type="catalytic activity">
    <reaction evidence="1">
        <text>N(6)-carboxybiotinyl-L-lysyl-[protein] + acetyl-CoA = N(6)-biotinyl-L-lysyl-[protein] + malonyl-CoA</text>
        <dbReference type="Rhea" id="RHEA:54728"/>
        <dbReference type="Rhea" id="RHEA-COMP:10505"/>
        <dbReference type="Rhea" id="RHEA-COMP:10506"/>
        <dbReference type="ChEBI" id="CHEBI:57288"/>
        <dbReference type="ChEBI" id="CHEBI:57384"/>
        <dbReference type="ChEBI" id="CHEBI:83144"/>
        <dbReference type="ChEBI" id="CHEBI:83145"/>
        <dbReference type="EC" id="2.1.3.15"/>
    </reaction>
</comment>
<comment type="pathway">
    <text evidence="1">Lipid metabolism; malonyl-CoA biosynthesis; malonyl-CoA from acetyl-CoA: step 1/1.</text>
</comment>
<comment type="subunit">
    <text evidence="1">Acetyl-CoA carboxylase is a heterohexamer composed of biotin carboxyl carrier protein (AccB), biotin carboxylase (AccC) and two subunits each of ACCase subunit alpha (AccA) and ACCase subunit beta (AccD).</text>
</comment>
<comment type="subcellular location">
    <subcellularLocation>
        <location evidence="1">Cytoplasm</location>
    </subcellularLocation>
</comment>
<comment type="similarity">
    <text evidence="1">Belongs to the AccD/PCCB family.</text>
</comment>
<evidence type="ECO:0000255" key="1">
    <source>
        <dbReference type="HAMAP-Rule" id="MF_01395"/>
    </source>
</evidence>
<evidence type="ECO:0000255" key="2">
    <source>
        <dbReference type="PROSITE-ProRule" id="PRU01136"/>
    </source>
</evidence>